<protein>
    <recommendedName>
        <fullName>Tubulin alpha-2 chain</fullName>
        <ecNumber evidence="3">3.6.5.-</ecNumber>
    </recommendedName>
</protein>
<feature type="chain" id="PRO_0000048159" description="Tubulin alpha-2 chain">
    <location>
        <begin position="1"/>
        <end position="449"/>
    </location>
</feature>
<feature type="active site" evidence="3">
    <location>
        <position position="254"/>
    </location>
</feature>
<feature type="binding site" evidence="3">
    <location>
        <position position="11"/>
    </location>
    <ligand>
        <name>GTP</name>
        <dbReference type="ChEBI" id="CHEBI:37565"/>
    </ligand>
</feature>
<feature type="binding site" evidence="3">
    <location>
        <position position="71"/>
    </location>
    <ligand>
        <name>GTP</name>
        <dbReference type="ChEBI" id="CHEBI:37565"/>
    </ligand>
</feature>
<feature type="binding site" evidence="3">
    <location>
        <position position="71"/>
    </location>
    <ligand>
        <name>Mg(2+)</name>
        <dbReference type="ChEBI" id="CHEBI:18420"/>
    </ligand>
</feature>
<feature type="binding site" evidence="3">
    <location>
        <position position="140"/>
    </location>
    <ligand>
        <name>GTP</name>
        <dbReference type="ChEBI" id="CHEBI:37565"/>
    </ligand>
</feature>
<feature type="binding site" evidence="3">
    <location>
        <position position="144"/>
    </location>
    <ligand>
        <name>GTP</name>
        <dbReference type="ChEBI" id="CHEBI:37565"/>
    </ligand>
</feature>
<feature type="binding site" evidence="3">
    <location>
        <position position="145"/>
    </location>
    <ligand>
        <name>GTP</name>
        <dbReference type="ChEBI" id="CHEBI:37565"/>
    </ligand>
</feature>
<feature type="binding site" evidence="3">
    <location>
        <position position="179"/>
    </location>
    <ligand>
        <name>GTP</name>
        <dbReference type="ChEBI" id="CHEBI:37565"/>
    </ligand>
</feature>
<feature type="binding site" evidence="3">
    <location>
        <position position="206"/>
    </location>
    <ligand>
        <name>GTP</name>
        <dbReference type="ChEBI" id="CHEBI:37565"/>
    </ligand>
</feature>
<feature type="binding site" evidence="3">
    <location>
        <position position="228"/>
    </location>
    <ligand>
        <name>GTP</name>
        <dbReference type="ChEBI" id="CHEBI:37565"/>
    </ligand>
</feature>
<feature type="site" description="Involved in polymerization">
    <location>
        <position position="449"/>
    </location>
</feature>
<feature type="modified residue" description="N6-acetyllysine" evidence="2">
    <location>
        <position position="40"/>
    </location>
</feature>
<feature type="sequence conflict" description="In Ref. 4; AAM29636." evidence="5" ref="4">
    <original>G</original>
    <variation>R</variation>
    <location>
        <position position="354"/>
    </location>
</feature>
<name>TBA2_DROME</name>
<organism>
    <name type="scientific">Drosophila melanogaster</name>
    <name type="common">Fruit fly</name>
    <dbReference type="NCBI Taxonomy" id="7227"/>
    <lineage>
        <taxon>Eukaryota</taxon>
        <taxon>Metazoa</taxon>
        <taxon>Ecdysozoa</taxon>
        <taxon>Arthropoda</taxon>
        <taxon>Hexapoda</taxon>
        <taxon>Insecta</taxon>
        <taxon>Pterygota</taxon>
        <taxon>Neoptera</taxon>
        <taxon>Endopterygota</taxon>
        <taxon>Diptera</taxon>
        <taxon>Brachycera</taxon>
        <taxon>Muscomorpha</taxon>
        <taxon>Ephydroidea</taxon>
        <taxon>Drosophilidae</taxon>
        <taxon>Drosophila</taxon>
        <taxon>Sophophora</taxon>
    </lineage>
</organism>
<reference key="1">
    <citation type="journal article" date="1986" name="Proc. Natl. Acad. Sci. U.S.A.">
        <title>Tissue-specific and constitutive alpha-tubulin genes of Drosophila melanogaster code for structurally distinct proteins.</title>
        <authorList>
            <person name="Theurkauf W.E."/>
            <person name="Baum H."/>
            <person name="Bo J."/>
            <person name="Wensink P.C."/>
        </authorList>
    </citation>
    <scope>NUCLEOTIDE SEQUENCE [GENOMIC DNA]</scope>
</reference>
<reference key="2">
    <citation type="journal article" date="2000" name="Science">
        <title>The genome sequence of Drosophila melanogaster.</title>
        <authorList>
            <person name="Adams M.D."/>
            <person name="Celniker S.E."/>
            <person name="Holt R.A."/>
            <person name="Evans C.A."/>
            <person name="Gocayne J.D."/>
            <person name="Amanatides P.G."/>
            <person name="Scherer S.E."/>
            <person name="Li P.W."/>
            <person name="Hoskins R.A."/>
            <person name="Galle R.F."/>
            <person name="George R.A."/>
            <person name="Lewis S.E."/>
            <person name="Richards S."/>
            <person name="Ashburner M."/>
            <person name="Henderson S.N."/>
            <person name="Sutton G.G."/>
            <person name="Wortman J.R."/>
            <person name="Yandell M.D."/>
            <person name="Zhang Q."/>
            <person name="Chen L.X."/>
            <person name="Brandon R.C."/>
            <person name="Rogers Y.-H.C."/>
            <person name="Blazej R.G."/>
            <person name="Champe M."/>
            <person name="Pfeiffer B.D."/>
            <person name="Wan K.H."/>
            <person name="Doyle C."/>
            <person name="Baxter E.G."/>
            <person name="Helt G."/>
            <person name="Nelson C.R."/>
            <person name="Miklos G.L.G."/>
            <person name="Abril J.F."/>
            <person name="Agbayani A."/>
            <person name="An H.-J."/>
            <person name="Andrews-Pfannkoch C."/>
            <person name="Baldwin D."/>
            <person name="Ballew R.M."/>
            <person name="Basu A."/>
            <person name="Baxendale J."/>
            <person name="Bayraktaroglu L."/>
            <person name="Beasley E.M."/>
            <person name="Beeson K.Y."/>
            <person name="Benos P.V."/>
            <person name="Berman B.P."/>
            <person name="Bhandari D."/>
            <person name="Bolshakov S."/>
            <person name="Borkova D."/>
            <person name="Botchan M.R."/>
            <person name="Bouck J."/>
            <person name="Brokstein P."/>
            <person name="Brottier P."/>
            <person name="Burtis K.C."/>
            <person name="Busam D.A."/>
            <person name="Butler H."/>
            <person name="Cadieu E."/>
            <person name="Center A."/>
            <person name="Chandra I."/>
            <person name="Cherry J.M."/>
            <person name="Cawley S."/>
            <person name="Dahlke C."/>
            <person name="Davenport L.B."/>
            <person name="Davies P."/>
            <person name="de Pablos B."/>
            <person name="Delcher A."/>
            <person name="Deng Z."/>
            <person name="Mays A.D."/>
            <person name="Dew I."/>
            <person name="Dietz S.M."/>
            <person name="Dodson K."/>
            <person name="Doup L.E."/>
            <person name="Downes M."/>
            <person name="Dugan-Rocha S."/>
            <person name="Dunkov B.C."/>
            <person name="Dunn P."/>
            <person name="Durbin K.J."/>
            <person name="Evangelista C.C."/>
            <person name="Ferraz C."/>
            <person name="Ferriera S."/>
            <person name="Fleischmann W."/>
            <person name="Fosler C."/>
            <person name="Gabrielian A.E."/>
            <person name="Garg N.S."/>
            <person name="Gelbart W.M."/>
            <person name="Glasser K."/>
            <person name="Glodek A."/>
            <person name="Gong F."/>
            <person name="Gorrell J.H."/>
            <person name="Gu Z."/>
            <person name="Guan P."/>
            <person name="Harris M."/>
            <person name="Harris N.L."/>
            <person name="Harvey D.A."/>
            <person name="Heiman T.J."/>
            <person name="Hernandez J.R."/>
            <person name="Houck J."/>
            <person name="Hostin D."/>
            <person name="Houston K.A."/>
            <person name="Howland T.J."/>
            <person name="Wei M.-H."/>
            <person name="Ibegwam C."/>
            <person name="Jalali M."/>
            <person name="Kalush F."/>
            <person name="Karpen G.H."/>
            <person name="Ke Z."/>
            <person name="Kennison J.A."/>
            <person name="Ketchum K.A."/>
            <person name="Kimmel B.E."/>
            <person name="Kodira C.D."/>
            <person name="Kraft C.L."/>
            <person name="Kravitz S."/>
            <person name="Kulp D."/>
            <person name="Lai Z."/>
            <person name="Lasko P."/>
            <person name="Lei Y."/>
            <person name="Levitsky A.A."/>
            <person name="Li J.H."/>
            <person name="Li Z."/>
            <person name="Liang Y."/>
            <person name="Lin X."/>
            <person name="Liu X."/>
            <person name="Mattei B."/>
            <person name="McIntosh T.C."/>
            <person name="McLeod M.P."/>
            <person name="McPherson D."/>
            <person name="Merkulov G."/>
            <person name="Milshina N.V."/>
            <person name="Mobarry C."/>
            <person name="Morris J."/>
            <person name="Moshrefi A."/>
            <person name="Mount S.M."/>
            <person name="Moy M."/>
            <person name="Murphy B."/>
            <person name="Murphy L."/>
            <person name="Muzny D.M."/>
            <person name="Nelson D.L."/>
            <person name="Nelson D.R."/>
            <person name="Nelson K.A."/>
            <person name="Nixon K."/>
            <person name="Nusskern D.R."/>
            <person name="Pacleb J.M."/>
            <person name="Palazzolo M."/>
            <person name="Pittman G.S."/>
            <person name="Pan S."/>
            <person name="Pollard J."/>
            <person name="Puri V."/>
            <person name="Reese M.G."/>
            <person name="Reinert K."/>
            <person name="Remington K."/>
            <person name="Saunders R.D.C."/>
            <person name="Scheeler F."/>
            <person name="Shen H."/>
            <person name="Shue B.C."/>
            <person name="Siden-Kiamos I."/>
            <person name="Simpson M."/>
            <person name="Skupski M.P."/>
            <person name="Smith T.J."/>
            <person name="Spier E."/>
            <person name="Spradling A.C."/>
            <person name="Stapleton M."/>
            <person name="Strong R."/>
            <person name="Sun E."/>
            <person name="Svirskas R."/>
            <person name="Tector C."/>
            <person name="Turner R."/>
            <person name="Venter E."/>
            <person name="Wang A.H."/>
            <person name="Wang X."/>
            <person name="Wang Z.-Y."/>
            <person name="Wassarman D.A."/>
            <person name="Weinstock G.M."/>
            <person name="Weissenbach J."/>
            <person name="Williams S.M."/>
            <person name="Woodage T."/>
            <person name="Worley K.C."/>
            <person name="Wu D."/>
            <person name="Yang S."/>
            <person name="Yao Q.A."/>
            <person name="Ye J."/>
            <person name="Yeh R.-F."/>
            <person name="Zaveri J.S."/>
            <person name="Zhan M."/>
            <person name="Zhang G."/>
            <person name="Zhao Q."/>
            <person name="Zheng L."/>
            <person name="Zheng X.H."/>
            <person name="Zhong F.N."/>
            <person name="Zhong W."/>
            <person name="Zhou X."/>
            <person name="Zhu S.C."/>
            <person name="Zhu X."/>
            <person name="Smith H.O."/>
            <person name="Gibbs R.A."/>
            <person name="Myers E.W."/>
            <person name="Rubin G.M."/>
            <person name="Venter J.C."/>
        </authorList>
    </citation>
    <scope>NUCLEOTIDE SEQUENCE [LARGE SCALE GENOMIC DNA]</scope>
    <source>
        <strain>Berkeley</strain>
    </source>
</reference>
<reference key="3">
    <citation type="journal article" date="2002" name="Genome Biol.">
        <title>Annotation of the Drosophila melanogaster euchromatic genome: a systematic review.</title>
        <authorList>
            <person name="Misra S."/>
            <person name="Crosby M.A."/>
            <person name="Mungall C.J."/>
            <person name="Matthews B.B."/>
            <person name="Campbell K.S."/>
            <person name="Hradecky P."/>
            <person name="Huang Y."/>
            <person name="Kaminker J.S."/>
            <person name="Millburn G.H."/>
            <person name="Prochnik S.E."/>
            <person name="Smith C.D."/>
            <person name="Tupy J.L."/>
            <person name="Whitfield E.J."/>
            <person name="Bayraktaroglu L."/>
            <person name="Berman B.P."/>
            <person name="Bettencourt B.R."/>
            <person name="Celniker S.E."/>
            <person name="de Grey A.D.N.J."/>
            <person name="Drysdale R.A."/>
            <person name="Harris N.L."/>
            <person name="Richter J."/>
            <person name="Russo S."/>
            <person name="Schroeder A.J."/>
            <person name="Shu S.Q."/>
            <person name="Stapleton M."/>
            <person name="Yamada C."/>
            <person name="Ashburner M."/>
            <person name="Gelbart W.M."/>
            <person name="Rubin G.M."/>
            <person name="Lewis S.E."/>
        </authorList>
    </citation>
    <scope>GENOME REANNOTATION</scope>
    <source>
        <strain>Berkeley</strain>
    </source>
</reference>
<reference key="4">
    <citation type="journal article" date="2002" name="Genome Biol.">
        <title>A Drosophila full-length cDNA resource.</title>
        <authorList>
            <person name="Stapleton M."/>
            <person name="Carlson J.W."/>
            <person name="Brokstein P."/>
            <person name="Yu C."/>
            <person name="Champe M."/>
            <person name="George R.A."/>
            <person name="Guarin H."/>
            <person name="Kronmiller B."/>
            <person name="Pacleb J.M."/>
            <person name="Park S."/>
            <person name="Wan K.H."/>
            <person name="Rubin G.M."/>
            <person name="Celniker S.E."/>
        </authorList>
    </citation>
    <scope>NUCLEOTIDE SEQUENCE [LARGE SCALE MRNA]</scope>
    <source>
        <strain>Berkeley</strain>
        <tissue>Head</tissue>
    </source>
</reference>
<reference key="5">
    <citation type="submission" date="2008-09" db="EMBL/GenBank/DDBJ databases">
        <authorList>
            <person name="Carlson J.W."/>
            <person name="Booth B."/>
            <person name="Frise E."/>
            <person name="Park S."/>
            <person name="Wan K.H."/>
            <person name="Yu C."/>
            <person name="Celniker S.E."/>
        </authorList>
    </citation>
    <scope>NUCLEOTIDE SEQUENCE [LARGE SCALE MRNA]</scope>
    <source>
        <strain>Berkeley</strain>
    </source>
</reference>
<reference key="6">
    <citation type="journal article" date="1993" name="Exp. Cell Res.">
        <title>Identification of Drosophila wing imaginal disc proteins by two-dimensional gel analysis and microsequencing.</title>
        <authorList>
            <person name="Santaren J.F."/>
            <person name="van Damme J."/>
            <person name="Puype M."/>
            <person name="Vandekerckhove J."/>
            <person name="Garcia-Bellido A."/>
        </authorList>
    </citation>
    <scope>PROTEIN SEQUENCE OF 65-79 AND 86-95</scope>
    <source>
        <strain>Vallecas</strain>
        <tissue>Wing imaginal disk</tissue>
    </source>
</reference>
<dbReference type="EC" id="3.6.5.-" evidence="3"/>
<dbReference type="EMBL" id="M14644">
    <property type="protein sequence ID" value="AAA28986.1"/>
    <property type="molecule type" value="Genomic_DNA"/>
</dbReference>
<dbReference type="EMBL" id="AE014297">
    <property type="protein sequence ID" value="AAF54433.1"/>
    <property type="molecule type" value="Genomic_DNA"/>
</dbReference>
<dbReference type="EMBL" id="AY113631">
    <property type="protein sequence ID" value="AAM29636.1"/>
    <property type="molecule type" value="mRNA"/>
</dbReference>
<dbReference type="EMBL" id="BT044334">
    <property type="protein sequence ID" value="ACH92399.1"/>
    <property type="molecule type" value="mRNA"/>
</dbReference>
<dbReference type="PIR" id="B26488">
    <property type="entry name" value="B26488"/>
</dbReference>
<dbReference type="RefSeq" id="NP_524297.1">
    <property type="nucleotide sequence ID" value="NM_079573.5"/>
</dbReference>
<dbReference type="SMR" id="P06604"/>
<dbReference type="BioGRID" id="66342">
    <property type="interactions" value="14"/>
</dbReference>
<dbReference type="FunCoup" id="P06604">
    <property type="interactions" value="86"/>
</dbReference>
<dbReference type="IntAct" id="P06604">
    <property type="interactions" value="11"/>
</dbReference>
<dbReference type="MINT" id="P06604"/>
<dbReference type="STRING" id="7227.FBpp0081565"/>
<dbReference type="PaxDb" id="7227-FBpp0081565"/>
<dbReference type="DNASU" id="41183"/>
<dbReference type="EnsemblMetazoa" id="FBtr0082087">
    <property type="protein sequence ID" value="FBpp0081565"/>
    <property type="gene ID" value="FBgn0003886"/>
</dbReference>
<dbReference type="GeneID" id="41183"/>
<dbReference type="KEGG" id="dme:Dmel_CG9476"/>
<dbReference type="AGR" id="FB:FBgn0003886"/>
<dbReference type="CTD" id="41183"/>
<dbReference type="FlyBase" id="FBgn0003886">
    <property type="gene designation" value="alphaTub85E"/>
</dbReference>
<dbReference type="VEuPathDB" id="VectorBase:FBgn0003886"/>
<dbReference type="eggNOG" id="KOG1376">
    <property type="taxonomic scope" value="Eukaryota"/>
</dbReference>
<dbReference type="GeneTree" id="ENSGT00950000182825"/>
<dbReference type="HOGENOM" id="CLU_015718_1_0_1"/>
<dbReference type="InParanoid" id="P06604"/>
<dbReference type="OMA" id="ESCYDIC"/>
<dbReference type="OrthoDB" id="1844at2759"/>
<dbReference type="PhylomeDB" id="P06604"/>
<dbReference type="Reactome" id="R-DME-3371497">
    <property type="pathway name" value="HSP90 chaperone cycle for steroid hormone receptors (SHR) in the presence of ligand"/>
</dbReference>
<dbReference type="Reactome" id="R-DME-6807878">
    <property type="pathway name" value="COPI-mediated anterograde transport"/>
</dbReference>
<dbReference type="Reactome" id="R-DME-6811434">
    <property type="pathway name" value="COPI-dependent Golgi-to-ER retrograde traffic"/>
</dbReference>
<dbReference type="Reactome" id="R-DME-6811436">
    <property type="pathway name" value="COPI-independent Golgi-to-ER retrograde traffic"/>
</dbReference>
<dbReference type="Reactome" id="R-DME-983189">
    <property type="pathway name" value="Kinesins"/>
</dbReference>
<dbReference type="SignaLink" id="P06604"/>
<dbReference type="BioGRID-ORCS" id="41183">
    <property type="hits" value="0 hits in 3 CRISPR screens"/>
</dbReference>
<dbReference type="GenomeRNAi" id="41183"/>
<dbReference type="PRO" id="PR:P06604"/>
<dbReference type="Proteomes" id="UP000000803">
    <property type="component" value="Chromosome 3R"/>
</dbReference>
<dbReference type="Bgee" id="FBgn0003886">
    <property type="expression patterns" value="Expressed in spermatocyte cyst cell (Drosophila) in testis and 24 other cell types or tissues"/>
</dbReference>
<dbReference type="GO" id="GO:0005737">
    <property type="term" value="C:cytoplasm"/>
    <property type="evidence" value="ECO:0000318"/>
    <property type="project" value="GO_Central"/>
</dbReference>
<dbReference type="GO" id="GO:0005881">
    <property type="term" value="C:cytoplasmic microtubule"/>
    <property type="evidence" value="ECO:0000315"/>
    <property type="project" value="FlyBase"/>
</dbReference>
<dbReference type="GO" id="GO:0005874">
    <property type="term" value="C:microtubule"/>
    <property type="evidence" value="ECO:0000314"/>
    <property type="project" value="FlyBase"/>
</dbReference>
<dbReference type="GO" id="GO:0005876">
    <property type="term" value="C:spindle microtubule"/>
    <property type="evidence" value="ECO:0000315"/>
    <property type="project" value="FlyBase"/>
</dbReference>
<dbReference type="GO" id="GO:0005525">
    <property type="term" value="F:GTP binding"/>
    <property type="evidence" value="ECO:0000318"/>
    <property type="project" value="GO_Central"/>
</dbReference>
<dbReference type="GO" id="GO:0016787">
    <property type="term" value="F:hydrolase activity"/>
    <property type="evidence" value="ECO:0007669"/>
    <property type="project" value="UniProtKB-KW"/>
</dbReference>
<dbReference type="GO" id="GO:0046872">
    <property type="term" value="F:metal ion binding"/>
    <property type="evidence" value="ECO:0007669"/>
    <property type="project" value="UniProtKB-KW"/>
</dbReference>
<dbReference type="GO" id="GO:0005200">
    <property type="term" value="F:structural constituent of cytoskeleton"/>
    <property type="evidence" value="ECO:0000314"/>
    <property type="project" value="FlyBase"/>
</dbReference>
<dbReference type="GO" id="GO:0000226">
    <property type="term" value="P:microtubule cytoskeleton organization"/>
    <property type="evidence" value="ECO:0000318"/>
    <property type="project" value="GO_Central"/>
</dbReference>
<dbReference type="GO" id="GO:0000278">
    <property type="term" value="P:mitotic cell cycle"/>
    <property type="evidence" value="ECO:0000318"/>
    <property type="project" value="GO_Central"/>
</dbReference>
<dbReference type="GO" id="GO:0009826">
    <property type="term" value="P:unidimensional cell growth"/>
    <property type="evidence" value="ECO:0000270"/>
    <property type="project" value="FlyBase"/>
</dbReference>
<dbReference type="CDD" id="cd02186">
    <property type="entry name" value="alpha_tubulin"/>
    <property type="match status" value="1"/>
</dbReference>
<dbReference type="FunFam" id="1.10.287.600:FF:000005">
    <property type="entry name" value="Tubulin alpha chain"/>
    <property type="match status" value="1"/>
</dbReference>
<dbReference type="FunFam" id="3.30.1330.20:FF:000001">
    <property type="entry name" value="Tubulin alpha chain"/>
    <property type="match status" value="1"/>
</dbReference>
<dbReference type="FunFam" id="3.40.50.1440:FF:000002">
    <property type="entry name" value="Tubulin alpha chain"/>
    <property type="match status" value="1"/>
</dbReference>
<dbReference type="Gene3D" id="1.10.287.600">
    <property type="entry name" value="Helix hairpin bin"/>
    <property type="match status" value="1"/>
</dbReference>
<dbReference type="Gene3D" id="3.30.1330.20">
    <property type="entry name" value="Tubulin/FtsZ, C-terminal domain"/>
    <property type="match status" value="1"/>
</dbReference>
<dbReference type="Gene3D" id="3.40.50.1440">
    <property type="entry name" value="Tubulin/FtsZ, GTPase domain"/>
    <property type="match status" value="1"/>
</dbReference>
<dbReference type="InterPro" id="IPR002452">
    <property type="entry name" value="Alpha_tubulin"/>
</dbReference>
<dbReference type="InterPro" id="IPR008280">
    <property type="entry name" value="Tub_FtsZ_C"/>
</dbReference>
<dbReference type="InterPro" id="IPR000217">
    <property type="entry name" value="Tubulin"/>
</dbReference>
<dbReference type="InterPro" id="IPR037103">
    <property type="entry name" value="Tubulin/FtsZ-like_C"/>
</dbReference>
<dbReference type="InterPro" id="IPR018316">
    <property type="entry name" value="Tubulin/FtsZ_2-layer-sand-dom"/>
</dbReference>
<dbReference type="InterPro" id="IPR036525">
    <property type="entry name" value="Tubulin/FtsZ_GTPase_sf"/>
</dbReference>
<dbReference type="InterPro" id="IPR023123">
    <property type="entry name" value="Tubulin_C"/>
</dbReference>
<dbReference type="InterPro" id="IPR017975">
    <property type="entry name" value="Tubulin_CS"/>
</dbReference>
<dbReference type="InterPro" id="IPR003008">
    <property type="entry name" value="Tubulin_FtsZ_GTPase"/>
</dbReference>
<dbReference type="PANTHER" id="PTHR11588">
    <property type="entry name" value="TUBULIN"/>
    <property type="match status" value="1"/>
</dbReference>
<dbReference type="Pfam" id="PF00091">
    <property type="entry name" value="Tubulin"/>
    <property type="match status" value="1"/>
</dbReference>
<dbReference type="Pfam" id="PF03953">
    <property type="entry name" value="Tubulin_C"/>
    <property type="match status" value="1"/>
</dbReference>
<dbReference type="PRINTS" id="PR01162">
    <property type="entry name" value="ALPHATUBULIN"/>
</dbReference>
<dbReference type="PRINTS" id="PR01161">
    <property type="entry name" value="TUBULIN"/>
</dbReference>
<dbReference type="SMART" id="SM00864">
    <property type="entry name" value="Tubulin"/>
    <property type="match status" value="1"/>
</dbReference>
<dbReference type="SMART" id="SM00865">
    <property type="entry name" value="Tubulin_C"/>
    <property type="match status" value="1"/>
</dbReference>
<dbReference type="SUPFAM" id="SSF55307">
    <property type="entry name" value="Tubulin C-terminal domain-like"/>
    <property type="match status" value="1"/>
</dbReference>
<dbReference type="SUPFAM" id="SSF52490">
    <property type="entry name" value="Tubulin nucleotide-binding domain-like"/>
    <property type="match status" value="1"/>
</dbReference>
<dbReference type="PROSITE" id="PS00227">
    <property type="entry name" value="TUBULIN"/>
    <property type="match status" value="1"/>
</dbReference>
<evidence type="ECO:0000250" key="1"/>
<evidence type="ECO:0000250" key="2">
    <source>
        <dbReference type="UniProtKB" id="P06603"/>
    </source>
</evidence>
<evidence type="ECO:0000250" key="3">
    <source>
        <dbReference type="UniProtKB" id="P68363"/>
    </source>
</evidence>
<evidence type="ECO:0000250" key="4">
    <source>
        <dbReference type="UniProtKB" id="P91910"/>
    </source>
</evidence>
<evidence type="ECO:0000305" key="5"/>
<proteinExistence type="evidence at protein level"/>
<keyword id="KW-0007">Acetylation</keyword>
<keyword id="KW-0963">Cytoplasm</keyword>
<keyword id="KW-0206">Cytoskeleton</keyword>
<keyword id="KW-0903">Direct protein sequencing</keyword>
<keyword id="KW-0342">GTP-binding</keyword>
<keyword id="KW-0378">Hydrolase</keyword>
<keyword id="KW-0460">Magnesium</keyword>
<keyword id="KW-0479">Metal-binding</keyword>
<keyword id="KW-0493">Microtubule</keyword>
<keyword id="KW-0547">Nucleotide-binding</keyword>
<keyword id="KW-1185">Reference proteome</keyword>
<comment type="function">
    <text>Tubulin is the major constituent of microtubules, a cylinder consisting of laterally associated linear protofilaments composed of alpha- and beta-tubulin heterodimers. Microtubules grow by the addition of GTP-tubulin dimers to the microtubule end, where a stabilizing cap forms. Below the cap, tubulin dimers are in GDP-bound state, owing to GTPase activity of alpha-tubulin.</text>
</comment>
<comment type="catalytic activity">
    <reaction evidence="3">
        <text>GTP + H2O = GDP + phosphate + H(+)</text>
        <dbReference type="Rhea" id="RHEA:19669"/>
        <dbReference type="ChEBI" id="CHEBI:15377"/>
        <dbReference type="ChEBI" id="CHEBI:15378"/>
        <dbReference type="ChEBI" id="CHEBI:37565"/>
        <dbReference type="ChEBI" id="CHEBI:43474"/>
        <dbReference type="ChEBI" id="CHEBI:58189"/>
    </reaction>
    <physiologicalReaction direction="left-to-right" evidence="3">
        <dbReference type="Rhea" id="RHEA:19670"/>
    </physiologicalReaction>
</comment>
<comment type="cofactor">
    <cofactor evidence="3">
        <name>Mg(2+)</name>
        <dbReference type="ChEBI" id="CHEBI:18420"/>
    </cofactor>
</comment>
<comment type="subunit">
    <text>Dimer of alpha and beta chains. A typical microtubule is a hollow water-filled tube with an outer diameter of 25 nm and an inner diameter of 15 nM. Alpha-beta heterodimers associate head-to-tail to form protofilaments running lengthwise along the microtubule wall with the beta-tubulin subunit facing the microtubule plus end conferring a structural polarity. Microtubules usually have 13 protofilaments but different protofilament numbers can be found in some organisms and specialized cells.</text>
</comment>
<comment type="subcellular location">
    <subcellularLocation>
        <location>Cytoplasm</location>
        <location>Cytoskeleton</location>
    </subcellularLocation>
</comment>
<comment type="PTM">
    <text evidence="1">Undergoes a tyrosination/detyrosination cycle, the cyclic removal and re-addition of a C-terminal tyrosine residue by the enzymes tubulin tyrosine carboxypeptidase (TTCP) and tubulin tyrosine ligase (TTL), respectively.</text>
</comment>
<comment type="PTM">
    <text evidence="1 2 4">Acetylation of alpha chains at Lys-40 stabilizes microtubules and affects affinity and processivity of microtubule motors. This modification has a role in multiple cellular functions, ranging from cell motility, cell cycle progression or cell differentiation to intracellular trafficking and signaling (By similarity). During the early stages of oogenesis lky/Alpha-tubulin N-acetyltransferase 2 is the main acetyltransferase responsible for Lys-40 acetylation in germline cells while Atat/alpha-tubulin N-acetyltransferase 1 is the main acetyltransferase responsible for Lys-40 acetylation in somatic cells (By similarity).</text>
</comment>
<comment type="similarity">
    <text evidence="5">Belongs to the tubulin family.</text>
</comment>
<accession>P06604</accession>
<accession>B5RJ60</accession>
<accession>Q8MYS4</accession>
<accession>Q9VH86</accession>
<sequence length="449" mass="49967">MRECISVHIGQAGVQIGNACWELYCLEHGIQPDGHMPSDKTVGGGDDSFSTFFSETGAGKHVPRAVFVDLEPTVVDEVRTGTYRQLFHPEQLITGKEDAANNYARGHYTIGKEIVDVVLDRIRKLADQCTGLQGFLVFHSFGGGTGSGFTSLLMERLSVDYGKKSKLEFSIYPAPQVSTAVVEPYNSILTTHTTLEHSDCAFMVDNEAIYDICRRNLDIERPTYMNLNRLIGQIVSSITASLRFDGALNVDLTEFQTNLVPYPRIHFPLATYAPVISVEKAYHEQLTVAEITNACFEPANQMVKCDPRRGKYMACCMLYRGDVVPKDVNAAIATIKTKRSIQFVDWCPTGFKVGINYQPPTVVPGGDLAKVQRAVCMLSNTTAIAEAWARLDHKFDLMYAKRAFVHWYVGEGMEEGEFAEAREDLAALEKDYEEVGIDSTTELGEDEEY</sequence>
<gene>
    <name type="primary">alphaTub85E</name>
    <name type="synonym">TUBA85E</name>
    <name type="ORF">CG9476</name>
</gene>